<protein>
    <recommendedName>
        <fullName>Ig kappa chain V-VI region NQ5-78.2.6</fullName>
    </recommendedName>
</protein>
<proteinExistence type="evidence at transcript level"/>
<comment type="function">
    <text>Anti-2-phenyl oxazolone (PHOX) Antibody.</text>
</comment>
<accession>P04944</accession>
<feature type="chain" id="PRO_0000059819" description="Ig kappa chain V-VI region NQ5-78.2.6">
    <location>
        <begin position="1"/>
        <end position="107" status="greater than"/>
    </location>
</feature>
<feature type="region of interest" description="Framework-1">
    <location>
        <begin position="1"/>
        <end position="23"/>
    </location>
</feature>
<feature type="region of interest" description="Complementarity-determining-1">
    <location>
        <begin position="24"/>
        <end position="33"/>
    </location>
</feature>
<feature type="region of interest" description="Framework-2">
    <location>
        <begin position="34"/>
        <end position="48"/>
    </location>
</feature>
<feature type="region of interest" description="Complementarity-determining-2">
    <location>
        <begin position="49"/>
        <end position="55"/>
    </location>
</feature>
<feature type="region of interest" description="Framework-3">
    <location>
        <begin position="56"/>
        <end position="87"/>
    </location>
</feature>
<feature type="region of interest" description="Complementarity-determining-3">
    <location>
        <begin position="88"/>
        <end position="96"/>
    </location>
</feature>
<feature type="region of interest" description="Framework-4">
    <location>
        <begin position="97"/>
        <end position="106"/>
    </location>
</feature>
<feature type="disulfide bond" evidence="1">
    <location>
        <begin position="23"/>
        <end position="87"/>
    </location>
</feature>
<feature type="non-terminal residue">
    <location>
        <position position="107"/>
    </location>
</feature>
<keyword id="KW-1064">Adaptive immunity</keyword>
<keyword id="KW-1015">Disulfide bond</keyword>
<keyword id="KW-0374">Hybridoma</keyword>
<keyword id="KW-0391">Immunity</keyword>
<keyword id="KW-1280">Immunoglobulin</keyword>
<keyword id="KW-1185">Reference proteome</keyword>
<reference key="1">
    <citation type="journal article" date="1983" name="Nature">
        <title>mRNA sequences define an unusually restricted IgG response to 2-phenyloxazolone and its early diversification.</title>
        <authorList>
            <person name="Kaartinen M."/>
            <person name="Griffiths G.M."/>
            <person name="Markham A.F."/>
            <person name="Milstein C."/>
        </authorList>
    </citation>
    <scope>NUCLEOTIDE SEQUENCE [MRNA]</scope>
</reference>
<organism>
    <name type="scientific">Mus musculus</name>
    <name type="common">Mouse</name>
    <dbReference type="NCBI Taxonomy" id="10090"/>
    <lineage>
        <taxon>Eukaryota</taxon>
        <taxon>Metazoa</taxon>
        <taxon>Chordata</taxon>
        <taxon>Craniata</taxon>
        <taxon>Vertebrata</taxon>
        <taxon>Euteleostomi</taxon>
        <taxon>Mammalia</taxon>
        <taxon>Eutheria</taxon>
        <taxon>Euarchontoglires</taxon>
        <taxon>Glires</taxon>
        <taxon>Rodentia</taxon>
        <taxon>Myomorpha</taxon>
        <taxon>Muroidea</taxon>
        <taxon>Muridae</taxon>
        <taxon>Murinae</taxon>
        <taxon>Mus</taxon>
        <taxon>Mus</taxon>
    </lineage>
</organism>
<sequence>QILLTQSPAIMSASPGQKVTMTCSASSSVSYMHWYQQKSGTSPKRWIYDTSKLASGVPARFXGSGSATSYSLTITSMQAEDAATYYCQQWSSNPLTFGSGTKLEXKR</sequence>
<evidence type="ECO:0000255" key="1">
    <source>
        <dbReference type="PROSITE-ProRule" id="PRU00114"/>
    </source>
</evidence>
<dbReference type="EMBL" id="K00744">
    <property type="protein sequence ID" value="AAA38689.1"/>
    <property type="molecule type" value="mRNA"/>
</dbReference>
<dbReference type="FunCoup" id="P04944">
    <property type="interactions" value="667"/>
</dbReference>
<dbReference type="InParanoid" id="P04944"/>
<dbReference type="Proteomes" id="UP000000589">
    <property type="component" value="Unplaced"/>
</dbReference>
<dbReference type="RNAct" id="P04944">
    <property type="molecule type" value="protein"/>
</dbReference>
<dbReference type="GO" id="GO:0019814">
    <property type="term" value="C:immunoglobulin complex"/>
    <property type="evidence" value="ECO:0000318"/>
    <property type="project" value="GO_Central"/>
</dbReference>
<dbReference type="GO" id="GO:0002250">
    <property type="term" value="P:adaptive immune response"/>
    <property type="evidence" value="ECO:0007669"/>
    <property type="project" value="UniProtKB-KW"/>
</dbReference>
<dbReference type="GO" id="GO:0006955">
    <property type="term" value="P:immune response"/>
    <property type="evidence" value="ECO:0000318"/>
    <property type="project" value="GO_Central"/>
</dbReference>
<dbReference type="FunFam" id="2.60.40.10:FF:001317">
    <property type="entry name" value="Immunoglobulin kappa chain variable 4-54"/>
    <property type="match status" value="1"/>
</dbReference>
<dbReference type="Gene3D" id="2.60.40.10">
    <property type="entry name" value="Immunoglobulins"/>
    <property type="match status" value="1"/>
</dbReference>
<dbReference type="InterPro" id="IPR007110">
    <property type="entry name" value="Ig-like_dom"/>
</dbReference>
<dbReference type="InterPro" id="IPR036179">
    <property type="entry name" value="Ig-like_dom_sf"/>
</dbReference>
<dbReference type="InterPro" id="IPR013783">
    <property type="entry name" value="Ig-like_fold"/>
</dbReference>
<dbReference type="InterPro" id="IPR003599">
    <property type="entry name" value="Ig_sub"/>
</dbReference>
<dbReference type="InterPro" id="IPR013106">
    <property type="entry name" value="Ig_V-set"/>
</dbReference>
<dbReference type="InterPro" id="IPR050150">
    <property type="entry name" value="IgV_Light_Chain"/>
</dbReference>
<dbReference type="PANTHER" id="PTHR23267">
    <property type="entry name" value="IMMUNOGLOBULIN LIGHT CHAIN"/>
    <property type="match status" value="1"/>
</dbReference>
<dbReference type="Pfam" id="PF07686">
    <property type="entry name" value="V-set"/>
    <property type="match status" value="1"/>
</dbReference>
<dbReference type="SMART" id="SM00409">
    <property type="entry name" value="IG"/>
    <property type="match status" value="1"/>
</dbReference>
<dbReference type="SMART" id="SM00406">
    <property type="entry name" value="IGv"/>
    <property type="match status" value="1"/>
</dbReference>
<dbReference type="SUPFAM" id="SSF48726">
    <property type="entry name" value="Immunoglobulin"/>
    <property type="match status" value="1"/>
</dbReference>
<dbReference type="PROSITE" id="PS50835">
    <property type="entry name" value="IG_LIKE"/>
    <property type="match status" value="1"/>
</dbReference>
<name>KV6AA_MOUSE</name>